<organism>
    <name type="scientific">Klebsiella pneumoniae (strain 342)</name>
    <dbReference type="NCBI Taxonomy" id="507522"/>
    <lineage>
        <taxon>Bacteria</taxon>
        <taxon>Pseudomonadati</taxon>
        <taxon>Pseudomonadota</taxon>
        <taxon>Gammaproteobacteria</taxon>
        <taxon>Enterobacterales</taxon>
        <taxon>Enterobacteriaceae</taxon>
        <taxon>Klebsiella/Raoultella group</taxon>
        <taxon>Klebsiella</taxon>
        <taxon>Klebsiella pneumoniae complex</taxon>
    </lineage>
</organism>
<accession>B5XT26</accession>
<proteinExistence type="inferred from homology"/>
<dbReference type="EC" id="3.5.1.105" evidence="1"/>
<dbReference type="EMBL" id="CP000964">
    <property type="protein sequence ID" value="ACI08028.1"/>
    <property type="molecule type" value="Genomic_DNA"/>
</dbReference>
<dbReference type="SMR" id="B5XT26"/>
<dbReference type="KEGG" id="kpe:KPK_3206"/>
<dbReference type="HOGENOM" id="CLU_064244_4_1_6"/>
<dbReference type="UniPathway" id="UPA00349"/>
<dbReference type="Proteomes" id="UP000001734">
    <property type="component" value="Chromosome"/>
</dbReference>
<dbReference type="GO" id="GO:0005737">
    <property type="term" value="C:cytoplasm"/>
    <property type="evidence" value="ECO:0007669"/>
    <property type="project" value="UniProtKB-SubCell"/>
</dbReference>
<dbReference type="GO" id="GO:0036311">
    <property type="term" value="F:chitin disaccharide deacetylase activity"/>
    <property type="evidence" value="ECO:0007669"/>
    <property type="project" value="UniProtKB-UniRule"/>
</dbReference>
<dbReference type="GO" id="GO:0019213">
    <property type="term" value="F:deacetylase activity"/>
    <property type="evidence" value="ECO:0007669"/>
    <property type="project" value="TreeGrafter"/>
</dbReference>
<dbReference type="GO" id="GO:0046872">
    <property type="term" value="F:metal ion binding"/>
    <property type="evidence" value="ECO:0007669"/>
    <property type="project" value="UniProtKB-KW"/>
</dbReference>
<dbReference type="GO" id="GO:0006032">
    <property type="term" value="P:chitin catabolic process"/>
    <property type="evidence" value="ECO:0007669"/>
    <property type="project" value="UniProtKB-UniPathway"/>
</dbReference>
<dbReference type="GO" id="GO:0052777">
    <property type="term" value="P:diacetylchitobiose catabolic process"/>
    <property type="evidence" value="ECO:0007669"/>
    <property type="project" value="UniProtKB-UniRule"/>
</dbReference>
<dbReference type="GO" id="GO:0000272">
    <property type="term" value="P:polysaccharide catabolic process"/>
    <property type="evidence" value="ECO:0007669"/>
    <property type="project" value="UniProtKB-UniRule"/>
</dbReference>
<dbReference type="CDD" id="cd10803">
    <property type="entry name" value="YdjC_EF3048_like"/>
    <property type="match status" value="1"/>
</dbReference>
<dbReference type="FunFam" id="3.20.20.370:FF:000001">
    <property type="entry name" value="Chitooligosaccharide deacetylase"/>
    <property type="match status" value="1"/>
</dbReference>
<dbReference type="Gene3D" id="3.20.20.370">
    <property type="entry name" value="Glycoside hydrolase/deacetylase"/>
    <property type="match status" value="1"/>
</dbReference>
<dbReference type="HAMAP" id="MF_01246">
    <property type="entry name" value="COD"/>
    <property type="match status" value="1"/>
</dbReference>
<dbReference type="InterPro" id="IPR022948">
    <property type="entry name" value="COD_ChbG_bac"/>
</dbReference>
<dbReference type="InterPro" id="IPR011330">
    <property type="entry name" value="Glyco_hydro/deAcase_b/a-brl"/>
</dbReference>
<dbReference type="InterPro" id="IPR006879">
    <property type="entry name" value="YdjC-like"/>
</dbReference>
<dbReference type="NCBIfam" id="NF002559">
    <property type="entry name" value="PRK02134.1"/>
    <property type="match status" value="1"/>
</dbReference>
<dbReference type="PANTHER" id="PTHR31609:SF1">
    <property type="entry name" value="CARBOHYDRATE DEACETYLASE"/>
    <property type="match status" value="1"/>
</dbReference>
<dbReference type="PANTHER" id="PTHR31609">
    <property type="entry name" value="YDJC DEACETYLASE FAMILY MEMBER"/>
    <property type="match status" value="1"/>
</dbReference>
<dbReference type="Pfam" id="PF04794">
    <property type="entry name" value="YdjC"/>
    <property type="match status" value="1"/>
</dbReference>
<dbReference type="SUPFAM" id="SSF88713">
    <property type="entry name" value="Glycoside hydrolase/deacetylase"/>
    <property type="match status" value="1"/>
</dbReference>
<reference key="1">
    <citation type="journal article" date="2008" name="PLoS Genet.">
        <title>Complete genome sequence of the N2-fixing broad host range endophyte Klebsiella pneumoniae 342 and virulence predictions verified in mice.</title>
        <authorList>
            <person name="Fouts D.E."/>
            <person name="Tyler H.L."/>
            <person name="DeBoy R.T."/>
            <person name="Daugherty S."/>
            <person name="Ren Q."/>
            <person name="Badger J.H."/>
            <person name="Durkin A.S."/>
            <person name="Huot H."/>
            <person name="Shrivastava S."/>
            <person name="Kothari S."/>
            <person name="Dodson R.J."/>
            <person name="Mohamoud Y."/>
            <person name="Khouri H."/>
            <person name="Roesch L.F.W."/>
            <person name="Krogfelt K.A."/>
            <person name="Struve C."/>
            <person name="Triplett E.W."/>
            <person name="Methe B.A."/>
        </authorList>
    </citation>
    <scope>NUCLEOTIDE SEQUENCE [LARGE SCALE GENOMIC DNA]</scope>
    <source>
        <strain>342</strain>
    </source>
</reference>
<name>CHBG_KLEP3</name>
<feature type="chain" id="PRO_1000139828" description="Chitooligosaccharide deacetylase">
    <location>
        <begin position="1"/>
        <end position="252"/>
    </location>
</feature>
<feature type="binding site" evidence="1">
    <location>
        <position position="61"/>
    </location>
    <ligand>
        <name>Mg(2+)</name>
        <dbReference type="ChEBI" id="CHEBI:18420"/>
    </ligand>
</feature>
<feature type="binding site" evidence="1">
    <location>
        <position position="125"/>
    </location>
    <ligand>
        <name>Mg(2+)</name>
        <dbReference type="ChEBI" id="CHEBI:18420"/>
    </ligand>
</feature>
<protein>
    <recommendedName>
        <fullName evidence="1">Chitooligosaccharide deacetylase</fullName>
        <shortName evidence="1">COD</shortName>
        <ecNumber evidence="1">3.5.1.105</ecNumber>
    </recommendedName>
    <alternativeName>
        <fullName evidence="1">Chitin disaccharide deacetylase</fullName>
    </alternativeName>
    <alternativeName>
        <fullName evidence="1">Chitobiose deacetylase</fullName>
    </alternativeName>
    <alternativeName>
        <fullName evidence="1">Chitobiose-6P deacetylase</fullName>
    </alternativeName>
    <alternativeName>
        <fullName evidence="1">Chitotriose deacetylase</fullName>
    </alternativeName>
    <alternativeName>
        <fullName evidence="1">Chitotriose-6P deacetylase</fullName>
    </alternativeName>
</protein>
<sequence length="252" mass="27566">MERVLIVNADDFGLSKGQNYGIIEACRNGVVTSTTALVNGAAIDHAAQLSRSTPELAVGMHFVLTLGEPLSAMPGLTREGRLGKWIWQQAEEGRLPLEEIAHELACQYRRFVDLFGHEPTHLDSHHHVHMIAPIYPIVAAFAREKGIALRIDRQVAAQSGLDQQAARSSAGFSSEFYGEAVSEELFLQTLDASIARGERSLEVMCHPAFVDQTIMGSAYCYPRLGELDVLTSAALKAAVADRGYRLGTYRDV</sequence>
<gene>
    <name evidence="1" type="primary">chbG</name>
    <name type="ordered locus">KPK_3206</name>
</gene>
<evidence type="ECO:0000255" key="1">
    <source>
        <dbReference type="HAMAP-Rule" id="MF_01246"/>
    </source>
</evidence>
<keyword id="KW-0119">Carbohydrate metabolism</keyword>
<keyword id="KW-0146">Chitin degradation</keyword>
<keyword id="KW-0963">Cytoplasm</keyword>
<keyword id="KW-0378">Hydrolase</keyword>
<keyword id="KW-0460">Magnesium</keyword>
<keyword id="KW-0479">Metal-binding</keyword>
<keyword id="KW-0624">Polysaccharide degradation</keyword>
<comment type="function">
    <text evidence="1">Involved in the degradation of chitin. ChbG is essential for growth on the acetylated chitooligosaccharides chitobiose and chitotriose but is dispensable for growth on cellobiose and chitosan dimer, the deacetylated form of chitobiose. Deacetylation of chitobiose-6-P and chitotriose-6-P is necessary for both the activation of the chb promoter by the regulatory protein ChbR and the hydrolysis of phosphorylated beta-glucosides by the phospho-beta-glucosidase ChbF. Catalyzes the removal of only one acetyl group from chitobiose-6-P to yield monoacetylchitobiose-6-P, the inducer of ChbR and the substrate of ChbF.</text>
</comment>
<comment type="catalytic activity">
    <reaction evidence="1">
        <text>N,N'-diacetylchitobiose + H2O = N-acetyl-beta-D-glucosaminyl-(1-&gt;4)-D-glucosamine + acetate</text>
        <dbReference type="Rhea" id="RHEA:27469"/>
        <dbReference type="ChEBI" id="CHEBI:15377"/>
        <dbReference type="ChEBI" id="CHEBI:28681"/>
        <dbReference type="ChEBI" id="CHEBI:30089"/>
        <dbReference type="ChEBI" id="CHEBI:59910"/>
        <dbReference type="EC" id="3.5.1.105"/>
    </reaction>
</comment>
<comment type="catalytic activity">
    <reaction evidence="1">
        <text>diacetylchitobiose-6'-phosphate + H2O = N'-monoacetylchitobiose-6'-phosphate + acetate</text>
        <dbReference type="Rhea" id="RHEA:35083"/>
        <dbReference type="ChEBI" id="CHEBI:15377"/>
        <dbReference type="ChEBI" id="CHEBI:30089"/>
        <dbReference type="ChEBI" id="CHEBI:64883"/>
        <dbReference type="ChEBI" id="CHEBI:71315"/>
    </reaction>
</comment>
<comment type="cofactor">
    <cofactor evidence="1">
        <name>Mg(2+)</name>
        <dbReference type="ChEBI" id="CHEBI:18420"/>
    </cofactor>
</comment>
<comment type="pathway">
    <text evidence="1">Glycan degradation; chitin degradation.</text>
</comment>
<comment type="subunit">
    <text evidence="1">Homodimer.</text>
</comment>
<comment type="subcellular location">
    <subcellularLocation>
        <location evidence="1">Cytoplasm</location>
    </subcellularLocation>
</comment>
<comment type="similarity">
    <text evidence="1">Belongs to the YdjC deacetylase family. ChbG subfamily.</text>
</comment>